<name>DMX1B_DANRE</name>
<accession>Q566X8</accession>
<protein>
    <recommendedName>
        <fullName>Diencephalon/mesencephalon homeobox protein 1-B</fullName>
    </recommendedName>
</protein>
<reference evidence="7 9" key="1">
    <citation type="journal article" date="2006" name="Dev. Genes Evol.">
        <title>Genomic sequence and spatiotemporal expression comparison of zebrafish mbx1 and its paralog, mbx2.</title>
        <authorList>
            <person name="Chang L."/>
            <person name="Khoo B."/>
            <person name="Wong L."/>
            <person name="Tropepe V."/>
        </authorList>
    </citation>
    <scope>NUCLEOTIDE SEQUENCE [MRNA]</scope>
    <scope>TISSUE SPECIFICITY</scope>
    <scope>DEVELOPMENTAL STAGE</scope>
    <source>
        <tissue evidence="6">Embryonic head</tissue>
    </source>
</reference>
<reference evidence="8" key="2">
    <citation type="submission" date="2005-04" db="EMBL/GenBank/DDBJ databases">
        <authorList>
            <consortium name="NIH - Zebrafish Gene Collection (ZGC) project"/>
        </authorList>
    </citation>
    <scope>NUCLEOTIDE SEQUENCE [LARGE SCALE MRNA]</scope>
    <source>
        <tissue evidence="8">Ovary</tissue>
    </source>
</reference>
<comment type="subcellular location">
    <subcellularLocation>
        <location evidence="1 3 4">Nucleus</location>
    </subcellularLocation>
</comment>
<comment type="tissue specificity">
    <text evidence="6">In embryos, expressed in mesencephalon with strongest expression ventrally. In adult, expressed in midbrain.</text>
</comment>
<comment type="developmental stage">
    <text evidence="6">Not expressed maternally. Low levels from 13-24 hours post-fertilization (hpf). Also expressed in adult.</text>
</comment>
<comment type="similarity">
    <text evidence="2">Belongs to the paired homeobox family.</text>
</comment>
<gene>
    <name evidence="10" type="primary">dmbx1b</name>
    <name evidence="9" type="synonym">mbx2</name>
    <name type="ORF">zgc:112395</name>
</gene>
<evidence type="ECO:0000250" key="1">
    <source>
        <dbReference type="UniProtKB" id="Q8NFW5"/>
    </source>
</evidence>
<evidence type="ECO:0000255" key="2"/>
<evidence type="ECO:0000255" key="3">
    <source>
        <dbReference type="PROSITE-ProRule" id="PRU00108"/>
    </source>
</evidence>
<evidence type="ECO:0000255" key="4">
    <source>
        <dbReference type="PROSITE-ProRule" id="PRU00138"/>
    </source>
</evidence>
<evidence type="ECO:0000256" key="5">
    <source>
        <dbReference type="SAM" id="MobiDB-lite"/>
    </source>
</evidence>
<evidence type="ECO:0000269" key="6">
    <source>
    </source>
</evidence>
<evidence type="ECO:0000305" key="7"/>
<evidence type="ECO:0000312" key="8">
    <source>
        <dbReference type="EMBL" id="AAH93284.1"/>
    </source>
</evidence>
<evidence type="ECO:0000312" key="9">
    <source>
        <dbReference type="EMBL" id="ABC47375.1"/>
    </source>
</evidence>
<evidence type="ECO:0000312" key="10">
    <source>
        <dbReference type="ZFIN" id="ZDB-GENE-050417-97"/>
    </source>
</evidence>
<dbReference type="EMBL" id="DQ317638">
    <property type="protein sequence ID" value="ABC47375.1"/>
    <property type="molecule type" value="mRNA"/>
</dbReference>
<dbReference type="EMBL" id="BC093284">
    <property type="protein sequence ID" value="AAH93284.1"/>
    <property type="molecule type" value="mRNA"/>
</dbReference>
<dbReference type="RefSeq" id="NP_001017625.1">
    <property type="nucleotide sequence ID" value="NM_001017625.2"/>
</dbReference>
<dbReference type="SMR" id="Q566X8"/>
<dbReference type="FunCoup" id="Q566X8">
    <property type="interactions" value="2"/>
</dbReference>
<dbReference type="STRING" id="7955.ENSDARP00000027542"/>
<dbReference type="PaxDb" id="7955-ENSDARP00000027542"/>
<dbReference type="Ensembl" id="ENSDART00000026693">
    <property type="protein sequence ID" value="ENSDARP00000027542"/>
    <property type="gene ID" value="ENSDARG00000002510"/>
</dbReference>
<dbReference type="GeneID" id="550288"/>
<dbReference type="KEGG" id="dre:550288"/>
<dbReference type="AGR" id="ZFIN:ZDB-GENE-050417-97"/>
<dbReference type="CTD" id="550288"/>
<dbReference type="ZFIN" id="ZDB-GENE-050417-97">
    <property type="gene designation" value="dmbx1b"/>
</dbReference>
<dbReference type="eggNOG" id="KOG0490">
    <property type="taxonomic scope" value="Eukaryota"/>
</dbReference>
<dbReference type="HOGENOM" id="CLU_060969_0_0_1"/>
<dbReference type="InParanoid" id="Q566X8"/>
<dbReference type="OMA" id="CQPYYQT"/>
<dbReference type="OrthoDB" id="6159439at2759"/>
<dbReference type="PhylomeDB" id="Q566X8"/>
<dbReference type="TreeFam" id="TF351609"/>
<dbReference type="PRO" id="PR:Q566X8"/>
<dbReference type="Proteomes" id="UP000000437">
    <property type="component" value="Chromosome 6"/>
</dbReference>
<dbReference type="Bgee" id="ENSDARG00000002510">
    <property type="expression patterns" value="Expressed in sensory ganglion and 25 other cell types or tissues"/>
</dbReference>
<dbReference type="ExpressionAtlas" id="Q566X8">
    <property type="expression patterns" value="baseline"/>
</dbReference>
<dbReference type="GO" id="GO:0005634">
    <property type="term" value="C:nucleus"/>
    <property type="evidence" value="ECO:0007669"/>
    <property type="project" value="UniProtKB-SubCell"/>
</dbReference>
<dbReference type="GO" id="GO:0000981">
    <property type="term" value="F:DNA-binding transcription factor activity, RNA polymerase II-specific"/>
    <property type="evidence" value="ECO:0000318"/>
    <property type="project" value="GO_Central"/>
</dbReference>
<dbReference type="GO" id="GO:0000977">
    <property type="term" value="F:RNA polymerase II transcription regulatory region sequence-specific DNA binding"/>
    <property type="evidence" value="ECO:0000318"/>
    <property type="project" value="GO_Central"/>
</dbReference>
<dbReference type="GO" id="GO:0030901">
    <property type="term" value="P:midbrain development"/>
    <property type="evidence" value="ECO:0000315"/>
    <property type="project" value="ZFIN"/>
</dbReference>
<dbReference type="GO" id="GO:0051726">
    <property type="term" value="P:regulation of cell cycle"/>
    <property type="evidence" value="ECO:0000315"/>
    <property type="project" value="ZFIN"/>
</dbReference>
<dbReference type="GO" id="GO:0007346">
    <property type="term" value="P:regulation of mitotic cell cycle"/>
    <property type="evidence" value="ECO:0000316"/>
    <property type="project" value="ZFIN"/>
</dbReference>
<dbReference type="GO" id="GO:0061074">
    <property type="term" value="P:regulation of neural retina development"/>
    <property type="evidence" value="ECO:0000316"/>
    <property type="project" value="ZFIN"/>
</dbReference>
<dbReference type="GO" id="GO:0050767">
    <property type="term" value="P:regulation of neurogenesis"/>
    <property type="evidence" value="ECO:0000315"/>
    <property type="project" value="ZFIN"/>
</dbReference>
<dbReference type="GO" id="GO:0006357">
    <property type="term" value="P:regulation of transcription by RNA polymerase II"/>
    <property type="evidence" value="ECO:0000318"/>
    <property type="project" value="GO_Central"/>
</dbReference>
<dbReference type="GO" id="GO:0060041">
    <property type="term" value="P:retina development in camera-type eye"/>
    <property type="evidence" value="ECO:0000315"/>
    <property type="project" value="ZFIN"/>
</dbReference>
<dbReference type="CDD" id="cd00086">
    <property type="entry name" value="homeodomain"/>
    <property type="match status" value="1"/>
</dbReference>
<dbReference type="FunFam" id="1.10.10.60:FF:000125">
    <property type="entry name" value="diencephalon/mesencephalon homeobox protein 1"/>
    <property type="match status" value="1"/>
</dbReference>
<dbReference type="Gene3D" id="1.10.10.60">
    <property type="entry name" value="Homeodomain-like"/>
    <property type="match status" value="1"/>
</dbReference>
<dbReference type="InterPro" id="IPR052488">
    <property type="entry name" value="DMBX_homeobox"/>
</dbReference>
<dbReference type="InterPro" id="IPR001356">
    <property type="entry name" value="HD"/>
</dbReference>
<dbReference type="InterPro" id="IPR017970">
    <property type="entry name" value="Homeobox_CS"/>
</dbReference>
<dbReference type="InterPro" id="IPR009057">
    <property type="entry name" value="Homeodomain-like_sf"/>
</dbReference>
<dbReference type="InterPro" id="IPR003654">
    <property type="entry name" value="OAR_dom"/>
</dbReference>
<dbReference type="PANTHER" id="PTHR46639">
    <property type="entry name" value="DIENCEPHALON/MESENCEPHALON HOMEOBOX PROTEIN 1"/>
    <property type="match status" value="1"/>
</dbReference>
<dbReference type="PANTHER" id="PTHR46639:SF3">
    <property type="entry name" value="DIENCEPHALON_MESENCEPHALON HOMEOBOX PROTEIN 1-A-RELATED"/>
    <property type="match status" value="1"/>
</dbReference>
<dbReference type="Pfam" id="PF00046">
    <property type="entry name" value="Homeodomain"/>
    <property type="match status" value="1"/>
</dbReference>
<dbReference type="Pfam" id="PF03826">
    <property type="entry name" value="OAR"/>
    <property type="match status" value="1"/>
</dbReference>
<dbReference type="SMART" id="SM00389">
    <property type="entry name" value="HOX"/>
    <property type="match status" value="1"/>
</dbReference>
<dbReference type="SUPFAM" id="SSF46689">
    <property type="entry name" value="Homeodomain-like"/>
    <property type="match status" value="1"/>
</dbReference>
<dbReference type="PROSITE" id="PS00027">
    <property type="entry name" value="HOMEOBOX_1"/>
    <property type="match status" value="1"/>
</dbReference>
<dbReference type="PROSITE" id="PS50071">
    <property type="entry name" value="HOMEOBOX_2"/>
    <property type="match status" value="1"/>
</dbReference>
<dbReference type="PROSITE" id="PS50803">
    <property type="entry name" value="OAR"/>
    <property type="match status" value="1"/>
</dbReference>
<feature type="chain" id="PRO_0000273272" description="Diencephalon/mesencephalon homeobox protein 1-B">
    <location>
        <begin position="1"/>
        <end position="369"/>
    </location>
</feature>
<feature type="DNA-binding region" description="Homeobox" evidence="3">
    <location>
        <begin position="66"/>
        <end position="125"/>
    </location>
</feature>
<feature type="region of interest" description="Disordered" evidence="5">
    <location>
        <begin position="124"/>
        <end position="253"/>
    </location>
</feature>
<feature type="short sequence motif" description="OAR" evidence="4">
    <location>
        <begin position="346"/>
        <end position="359"/>
    </location>
</feature>
<feature type="compositionally biased region" description="Basic and acidic residues" evidence="5">
    <location>
        <begin position="128"/>
        <end position="152"/>
    </location>
</feature>
<feature type="compositionally biased region" description="Polar residues" evidence="5">
    <location>
        <begin position="181"/>
        <end position="191"/>
    </location>
</feature>
<feature type="compositionally biased region" description="Acidic residues" evidence="5">
    <location>
        <begin position="194"/>
        <end position="203"/>
    </location>
</feature>
<feature type="compositionally biased region" description="Basic and acidic residues" evidence="5">
    <location>
        <begin position="204"/>
        <end position="214"/>
    </location>
</feature>
<feature type="compositionally biased region" description="Low complexity" evidence="5">
    <location>
        <begin position="222"/>
        <end position="233"/>
    </location>
</feature>
<feature type="compositionally biased region" description="Polar residues" evidence="5">
    <location>
        <begin position="244"/>
        <end position="253"/>
    </location>
</feature>
<organism>
    <name type="scientific">Danio rerio</name>
    <name type="common">Zebrafish</name>
    <name type="synonym">Brachydanio rerio</name>
    <dbReference type="NCBI Taxonomy" id="7955"/>
    <lineage>
        <taxon>Eukaryota</taxon>
        <taxon>Metazoa</taxon>
        <taxon>Chordata</taxon>
        <taxon>Craniata</taxon>
        <taxon>Vertebrata</taxon>
        <taxon>Euteleostomi</taxon>
        <taxon>Actinopterygii</taxon>
        <taxon>Neopterygii</taxon>
        <taxon>Teleostei</taxon>
        <taxon>Ostariophysi</taxon>
        <taxon>Cypriniformes</taxon>
        <taxon>Danionidae</taxon>
        <taxon>Danioninae</taxon>
        <taxon>Danio</taxon>
    </lineage>
</organism>
<sequence>MQHYGVNGYSLHAMNSLSAMYNLHQQAAQHAQHAPDYRPSVHALTLAERLADIILEARYGSQHRKQRRSRTAFTAQQLEALEKTFQKTHYPDVVMRERLAMCTNLPEARVQVWFKNRRAKFRKKQRSLQKEQLQRLKEAGTEGAQDEGKEEAPPVEAQAPPSPLDGRGLTSAPSCELNEEVNVTSPEQSGAESGAEDTTDREDEPLSIKDEIKEAGPPLMTDDSSPSYKPLSPKSDDPLVSPALPSSSGAVAQSNSYASSPLSLFRLQEQFRQHMAATNNLMHYPAFDVTAPSSLPYLGVNVNMASPLGSLPCQPYYQTLTQAQQMWSSPLLQGSGGLPALNSKTTSIENLRLRAKQHAASLGLDTLPN</sequence>
<keyword id="KW-0217">Developmental protein</keyword>
<keyword id="KW-0238">DNA-binding</keyword>
<keyword id="KW-0371">Homeobox</keyword>
<keyword id="KW-0539">Nucleus</keyword>
<keyword id="KW-1185">Reference proteome</keyword>
<proteinExistence type="evidence at transcript level"/>